<name>YPC4_CAEEL</name>
<organism>
    <name type="scientific">Caenorhabditis elegans</name>
    <dbReference type="NCBI Taxonomy" id="6239"/>
    <lineage>
        <taxon>Eukaryota</taxon>
        <taxon>Metazoa</taxon>
        <taxon>Ecdysozoa</taxon>
        <taxon>Nematoda</taxon>
        <taxon>Chromadorea</taxon>
        <taxon>Rhabditida</taxon>
        <taxon>Rhabditina</taxon>
        <taxon>Rhabditomorpha</taxon>
        <taxon>Rhabditoidea</taxon>
        <taxon>Rhabditidae</taxon>
        <taxon>Peloderinae</taxon>
        <taxon>Caenorhabditis</taxon>
    </lineage>
</organism>
<sequence length="597" mass="67535">MTARPYEPPPDYFCTHLLKNHQIEWKKPVKAKASPIHLFVFLREPMIEQRWPTTVRNSSIHPHVSSAHPSYRSHSIDAAVNRSSSACFHSPHRPSFPSRGLQKYDYPICGVSPSRHLSYNHFYNQSAAEIEEMLRTRQFPEIAGIYGNDEQPSLRRFTRYNQSINSRAVPPPAPPNPPKMEKHMSHDTSGRGSIFSKSSKKPLFFMGNWTFRDRNKSARPSISEALREERPQSMNLSDIKPATRSKSGEVLGPRNHIHIESITEFPRNIETRVPVKIERSSMVRRKPSNMGGSTEVSITSSSPSPSSSSSTSTGEFKTTITVDDDHQPTAVMRPKKESDTRGTLNNNRYSFQSCVQLRKSCPDLDSTAMSNMEQHRVSKKRTRRAKEKMSQAAWKRKTVKEWSLDDVLLWLQSAQMDDVAGLLIGYDLRGEDLLQWNDQTLAQLGVSNPEIRKKLLDDLSKIIENGPEPAQEDIRNNHRTLFDIVKQTSYDQVLAVETPLTTRDITVTHGRLGCLQITKVNGANLPLKEHDCLLEINERAGEQFKSALMLTKLISDSNGAAIRFVVLRRKTNLVVEESQQKESSSSGISSSPQTPTE</sequence>
<feature type="chain" id="PRO_0000065146" description="Uncharacterized protein C05D10.4">
    <location>
        <begin position="1"/>
        <end position="597"/>
    </location>
</feature>
<feature type="domain" description="SAM" evidence="1">
    <location>
        <begin position="402"/>
        <end position="465"/>
    </location>
</feature>
<feature type="region of interest" description="Disordered" evidence="2">
    <location>
        <begin position="165"/>
        <end position="197"/>
    </location>
</feature>
<feature type="region of interest" description="Disordered" evidence="2">
    <location>
        <begin position="278"/>
        <end position="344"/>
    </location>
</feature>
<feature type="region of interest" description="Disordered" evidence="2">
    <location>
        <begin position="576"/>
        <end position="597"/>
    </location>
</feature>
<feature type="compositionally biased region" description="Pro residues" evidence="2">
    <location>
        <begin position="169"/>
        <end position="178"/>
    </location>
</feature>
<feature type="compositionally biased region" description="Basic and acidic residues" evidence="2">
    <location>
        <begin position="179"/>
        <end position="189"/>
    </location>
</feature>
<feature type="compositionally biased region" description="Low complexity" evidence="2">
    <location>
        <begin position="293"/>
        <end position="313"/>
    </location>
</feature>
<feature type="compositionally biased region" description="Low complexity" evidence="2">
    <location>
        <begin position="581"/>
        <end position="597"/>
    </location>
</feature>
<feature type="splice variant" id="VSP_007785" description="In isoform c." evidence="3">
    <location>
        <begin position="1"/>
        <end position="179"/>
    </location>
</feature>
<feature type="splice variant" id="VSP_007786" description="In isoform a." evidence="3">
    <location>
        <begin position="13"/>
        <end position="44"/>
    </location>
</feature>
<comment type="interaction">
    <interactant intactId="EBI-2316016">
        <id>Q11181</id>
    </interactant>
    <interactant intactId="EBI-2315883">
        <id>P03949</id>
        <label>abl-1</label>
    </interactant>
    <organismsDiffer>false</organismsDiffer>
    <experiments>6</experiments>
</comment>
<comment type="alternative products">
    <event type="alternative splicing"/>
    <isoform>
        <id>Q11181-1</id>
        <name>b</name>
        <sequence type="displayed"/>
    </isoform>
    <isoform>
        <id>Q11181-2</id>
        <name>a</name>
        <sequence type="described" ref="VSP_007786"/>
    </isoform>
    <isoform>
        <id>Q11181-3</id>
        <name>c</name>
        <sequence type="described" ref="VSP_007785"/>
    </isoform>
</comment>
<dbReference type="EMBL" id="FO080362">
    <property type="protein sequence ID" value="CCD63177.1"/>
    <property type="molecule type" value="Genomic_DNA"/>
</dbReference>
<dbReference type="EMBL" id="FO080362">
    <property type="protein sequence ID" value="CCD63178.1"/>
    <property type="molecule type" value="Genomic_DNA"/>
</dbReference>
<dbReference type="EMBL" id="FO080362">
    <property type="protein sequence ID" value="CCD63179.1"/>
    <property type="molecule type" value="Genomic_DNA"/>
</dbReference>
<dbReference type="PIR" id="C88474">
    <property type="entry name" value="C88474"/>
</dbReference>
<dbReference type="RefSeq" id="NP_498323.2">
    <molecule id="Q11181-2"/>
    <property type="nucleotide sequence ID" value="NM_065922.4"/>
</dbReference>
<dbReference type="RefSeq" id="NP_498324.2">
    <property type="nucleotide sequence ID" value="NM_065923.4"/>
</dbReference>
<dbReference type="RefSeq" id="NP_741170.1">
    <molecule id="Q11181-3"/>
    <property type="nucleotide sequence ID" value="NM_171149.5"/>
</dbReference>
<dbReference type="SMR" id="Q11181"/>
<dbReference type="BioGRID" id="41081">
    <property type="interactions" value="8"/>
</dbReference>
<dbReference type="FunCoup" id="Q11181">
    <property type="interactions" value="27"/>
</dbReference>
<dbReference type="IntAct" id="Q11181">
    <property type="interactions" value="8"/>
</dbReference>
<dbReference type="PaxDb" id="6239-C05D10.4b"/>
<dbReference type="EnsemblMetazoa" id="C05D10.4a.1">
    <molecule id="Q11181-2"/>
    <property type="protein sequence ID" value="C05D10.4a.1"/>
    <property type="gene ID" value="WBGene00015480"/>
</dbReference>
<dbReference type="EnsemblMetazoa" id="C05D10.4b.1">
    <property type="protein sequence ID" value="C05D10.4b.1"/>
    <property type="gene ID" value="WBGene00015480"/>
</dbReference>
<dbReference type="EnsemblMetazoa" id="C05D10.4c.1">
    <molecule id="Q11181-3"/>
    <property type="protein sequence ID" value="C05D10.4c.1"/>
    <property type="gene ID" value="WBGene00015480"/>
</dbReference>
<dbReference type="GeneID" id="175860"/>
<dbReference type="KEGG" id="cel:CELE_C05D10.4"/>
<dbReference type="UCSC" id="C05D10.4b">
    <molecule id="Q11181-1"/>
    <property type="organism name" value="c. elegans"/>
</dbReference>
<dbReference type="AGR" id="WB:WBGene00015480"/>
<dbReference type="CTD" id="175860"/>
<dbReference type="WormBase" id="C05D10.4a">
    <molecule id="Q11181-2"/>
    <property type="protein sequence ID" value="CE30423"/>
    <property type="gene ID" value="WBGene00015480"/>
</dbReference>
<dbReference type="WormBase" id="C05D10.4b">
    <molecule id="Q11181-1"/>
    <property type="protein sequence ID" value="CE30424"/>
    <property type="gene ID" value="WBGene00015480"/>
</dbReference>
<dbReference type="WormBase" id="C05D10.4c">
    <molecule id="Q11181-3"/>
    <property type="protein sequence ID" value="CE30425"/>
    <property type="gene ID" value="WBGene00015480"/>
</dbReference>
<dbReference type="eggNOG" id="ENOG502SNV0">
    <property type="taxonomic scope" value="Eukaryota"/>
</dbReference>
<dbReference type="InParanoid" id="Q11181"/>
<dbReference type="OMA" id="FQSCVQL"/>
<dbReference type="OrthoDB" id="5917777at2759"/>
<dbReference type="PRO" id="PR:Q11181"/>
<dbReference type="Proteomes" id="UP000001940">
    <property type="component" value="Chromosome III"/>
</dbReference>
<dbReference type="Bgee" id="WBGene00015480">
    <property type="expression patterns" value="Expressed in pharyngeal muscle cell (C elegans) and 3 other cell types or tissues"/>
</dbReference>
<dbReference type="CDD" id="cd09487">
    <property type="entry name" value="SAM_superfamily"/>
    <property type="match status" value="1"/>
</dbReference>
<dbReference type="Gene3D" id="1.10.150.50">
    <property type="entry name" value="Transcription Factor, Ets-1"/>
    <property type="match status" value="1"/>
</dbReference>
<dbReference type="InterPro" id="IPR001660">
    <property type="entry name" value="SAM"/>
</dbReference>
<dbReference type="InterPro" id="IPR013761">
    <property type="entry name" value="SAM/pointed_sf"/>
</dbReference>
<dbReference type="Pfam" id="PF07647">
    <property type="entry name" value="SAM_2"/>
    <property type="match status" value="1"/>
</dbReference>
<dbReference type="SMART" id="SM00454">
    <property type="entry name" value="SAM"/>
    <property type="match status" value="1"/>
</dbReference>
<dbReference type="SUPFAM" id="SSF47769">
    <property type="entry name" value="SAM/Pointed domain"/>
    <property type="match status" value="1"/>
</dbReference>
<dbReference type="PROSITE" id="PS50105">
    <property type="entry name" value="SAM_DOMAIN"/>
    <property type="match status" value="1"/>
</dbReference>
<evidence type="ECO:0000255" key="1">
    <source>
        <dbReference type="PROSITE-ProRule" id="PRU00184"/>
    </source>
</evidence>
<evidence type="ECO:0000256" key="2">
    <source>
        <dbReference type="SAM" id="MobiDB-lite"/>
    </source>
</evidence>
<evidence type="ECO:0000305" key="3"/>
<keyword id="KW-0025">Alternative splicing</keyword>
<keyword id="KW-1185">Reference proteome</keyword>
<reference key="1">
    <citation type="journal article" date="1998" name="Science">
        <title>Genome sequence of the nematode C. elegans: a platform for investigating biology.</title>
        <authorList>
            <consortium name="The C. elegans sequencing consortium"/>
        </authorList>
    </citation>
    <scope>NUCLEOTIDE SEQUENCE [LARGE SCALE GENOMIC DNA]</scope>
    <scope>ALTERNATIVE SPLICING</scope>
    <source>
        <strain>Bristol N2</strain>
    </source>
</reference>
<accession>Q11181</accession>
<accession>Q8T3F3</accession>
<accession>Q8T3F4</accession>
<accession>Q8T3F5</accession>
<protein>
    <recommendedName>
        <fullName>Uncharacterized protein C05D10.4</fullName>
    </recommendedName>
</protein>
<proteinExistence type="evidence at protein level"/>
<gene>
    <name type="ORF">C05D10.4</name>
</gene>